<keyword id="KW-0963">Cytoplasm</keyword>
<keyword id="KW-0520">NAD</keyword>
<keyword id="KW-0521">NADP</keyword>
<keyword id="KW-0560">Oxidoreductase</keyword>
<keyword id="KW-1185">Reference proteome</keyword>
<name>GHRB_SHIB3</name>
<accession>B2U573</accession>
<gene>
    <name evidence="1" type="primary">ghrB</name>
    <name type="ordered locus">SbBS512_E3973</name>
</gene>
<protein>
    <recommendedName>
        <fullName evidence="1">Glyoxylate/hydroxypyruvate reductase B</fullName>
        <ecNumber evidence="1">1.1.1.79</ecNumber>
        <ecNumber evidence="1">1.1.1.81</ecNumber>
    </recommendedName>
</protein>
<feature type="chain" id="PRO_0000348399" description="Glyoxylate/hydroxypyruvate reductase B">
    <location>
        <begin position="1"/>
        <end position="324"/>
    </location>
</feature>
<feature type="active site" evidence="1">
    <location>
        <position position="237"/>
    </location>
</feature>
<feature type="active site" evidence="1">
    <location>
        <position position="266"/>
    </location>
</feature>
<feature type="active site" description="Proton donor" evidence="1">
    <location>
        <position position="285"/>
    </location>
</feature>
<dbReference type="EC" id="1.1.1.79" evidence="1"/>
<dbReference type="EC" id="1.1.1.81" evidence="1"/>
<dbReference type="EMBL" id="CP001063">
    <property type="protein sequence ID" value="ACD06290.1"/>
    <property type="molecule type" value="Genomic_DNA"/>
</dbReference>
<dbReference type="RefSeq" id="WP_000805027.1">
    <property type="nucleotide sequence ID" value="NC_010658.1"/>
</dbReference>
<dbReference type="SMR" id="B2U573"/>
<dbReference type="STRING" id="344609.SbBS512_E3973"/>
<dbReference type="GeneID" id="75203026"/>
<dbReference type="KEGG" id="sbc:SbBS512_E3973"/>
<dbReference type="HOGENOM" id="CLU_019796_1_2_6"/>
<dbReference type="Proteomes" id="UP000001030">
    <property type="component" value="Chromosome"/>
</dbReference>
<dbReference type="GO" id="GO:0005829">
    <property type="term" value="C:cytosol"/>
    <property type="evidence" value="ECO:0007669"/>
    <property type="project" value="TreeGrafter"/>
</dbReference>
<dbReference type="GO" id="GO:0005886">
    <property type="term" value="C:plasma membrane"/>
    <property type="evidence" value="ECO:0007669"/>
    <property type="project" value="UniProtKB-UniRule"/>
</dbReference>
<dbReference type="GO" id="GO:0030267">
    <property type="term" value="F:glyoxylate reductase (NADPH) activity"/>
    <property type="evidence" value="ECO:0007669"/>
    <property type="project" value="UniProtKB-UniRule"/>
</dbReference>
<dbReference type="GO" id="GO:0008465">
    <property type="term" value="F:hydroxypyruvate reductase (NADH) activity"/>
    <property type="evidence" value="ECO:0007669"/>
    <property type="project" value="RHEA"/>
</dbReference>
<dbReference type="GO" id="GO:0120509">
    <property type="term" value="F:hydroxypyruvate reductase (NADPH) activity"/>
    <property type="evidence" value="ECO:0007669"/>
    <property type="project" value="RHEA"/>
</dbReference>
<dbReference type="GO" id="GO:0051287">
    <property type="term" value="F:NAD binding"/>
    <property type="evidence" value="ECO:0007669"/>
    <property type="project" value="InterPro"/>
</dbReference>
<dbReference type="CDD" id="cd05301">
    <property type="entry name" value="GDH"/>
    <property type="match status" value="1"/>
</dbReference>
<dbReference type="FunFam" id="3.40.50.720:FF:000026">
    <property type="entry name" value="Glyoxylate/hydroxypyruvate reductase B"/>
    <property type="match status" value="1"/>
</dbReference>
<dbReference type="Gene3D" id="3.40.50.720">
    <property type="entry name" value="NAD(P)-binding Rossmann-like Domain"/>
    <property type="match status" value="2"/>
</dbReference>
<dbReference type="HAMAP" id="MF_01667">
    <property type="entry name" value="2_Hacid_dh_C_GhrB"/>
    <property type="match status" value="1"/>
</dbReference>
<dbReference type="InterPro" id="IPR050223">
    <property type="entry name" value="D-isomer_2-hydroxyacid_DH"/>
</dbReference>
<dbReference type="InterPro" id="IPR006139">
    <property type="entry name" value="D-isomer_2_OHA_DH_cat_dom"/>
</dbReference>
<dbReference type="InterPro" id="IPR029753">
    <property type="entry name" value="D-isomer_DH_CS"/>
</dbReference>
<dbReference type="InterPro" id="IPR006140">
    <property type="entry name" value="D-isomer_DH_NAD-bd"/>
</dbReference>
<dbReference type="InterPro" id="IPR023756">
    <property type="entry name" value="Glyo/OHPyrv_Rdtase_B"/>
</dbReference>
<dbReference type="InterPro" id="IPR036291">
    <property type="entry name" value="NAD(P)-bd_dom_sf"/>
</dbReference>
<dbReference type="NCBIfam" id="NF011938">
    <property type="entry name" value="PRK15409.1"/>
    <property type="match status" value="1"/>
</dbReference>
<dbReference type="PANTHER" id="PTHR10996">
    <property type="entry name" value="2-HYDROXYACID DEHYDROGENASE-RELATED"/>
    <property type="match status" value="1"/>
</dbReference>
<dbReference type="PANTHER" id="PTHR10996:SF283">
    <property type="entry name" value="GLYOXYLATE_HYDROXYPYRUVATE REDUCTASE B"/>
    <property type="match status" value="1"/>
</dbReference>
<dbReference type="Pfam" id="PF00389">
    <property type="entry name" value="2-Hacid_dh"/>
    <property type="match status" value="1"/>
</dbReference>
<dbReference type="Pfam" id="PF02826">
    <property type="entry name" value="2-Hacid_dh_C"/>
    <property type="match status" value="1"/>
</dbReference>
<dbReference type="SUPFAM" id="SSF52283">
    <property type="entry name" value="Formate/glycerate dehydrogenase catalytic domain-like"/>
    <property type="match status" value="1"/>
</dbReference>
<dbReference type="SUPFAM" id="SSF51735">
    <property type="entry name" value="NAD(P)-binding Rossmann-fold domains"/>
    <property type="match status" value="1"/>
</dbReference>
<dbReference type="PROSITE" id="PS00670">
    <property type="entry name" value="D_2_HYDROXYACID_DH_2"/>
    <property type="match status" value="1"/>
</dbReference>
<dbReference type="PROSITE" id="PS00671">
    <property type="entry name" value="D_2_HYDROXYACID_DH_3"/>
    <property type="match status" value="1"/>
</dbReference>
<evidence type="ECO:0000255" key="1">
    <source>
        <dbReference type="HAMAP-Rule" id="MF_01667"/>
    </source>
</evidence>
<reference key="1">
    <citation type="submission" date="2008-05" db="EMBL/GenBank/DDBJ databases">
        <title>Complete sequence of Shigella boydii serotype 18 strain BS512.</title>
        <authorList>
            <person name="Rasko D.A."/>
            <person name="Rosovitz M."/>
            <person name="Maurelli A.T."/>
            <person name="Myers G."/>
            <person name="Seshadri R."/>
            <person name="Cer R."/>
            <person name="Jiang L."/>
            <person name="Ravel J."/>
            <person name="Sebastian Y."/>
        </authorList>
    </citation>
    <scope>NUCLEOTIDE SEQUENCE [LARGE SCALE GENOMIC DNA]</scope>
    <source>
        <strain>CDC 3083-94 / BS512</strain>
    </source>
</reference>
<organism>
    <name type="scientific">Shigella boydii serotype 18 (strain CDC 3083-94 / BS512)</name>
    <dbReference type="NCBI Taxonomy" id="344609"/>
    <lineage>
        <taxon>Bacteria</taxon>
        <taxon>Pseudomonadati</taxon>
        <taxon>Pseudomonadota</taxon>
        <taxon>Gammaproteobacteria</taxon>
        <taxon>Enterobacterales</taxon>
        <taxon>Enterobacteriaceae</taxon>
        <taxon>Shigella</taxon>
    </lineage>
</organism>
<sequence>MKPSVILYKALPDDLLQRLQEHFTVHQVANLSPQTVEQNAAIFAEAEGLLGSNENVDAALLEKMPKLRATSTISVGYDNFDVDALTARKILLMHTPTVLTETVADTLMALVLSTARRVVEVAERVKAGEWTASIGPDWYGTDVHHKTLGIVGMGRIGMALAQRAHFGFNMPILYNARRHHKEAEERFNARYCDLDTLLQESDFVCLILPLTDETHHLFGAEQFAKMKSSAIFINAGRGPVVDENALIAALQKGEIHAAGLDVFEQEPLSVDSPLLSMANVVAVPHIGSATHETRYGMAACAVDNLIDALQGKVEKNCVNPHVAD</sequence>
<proteinExistence type="inferred from homology"/>
<comment type="function">
    <text evidence="1">Catalyzes the NADPH-dependent reduction of glyoxylate and hydroxypyruvate into glycolate and glycerate, respectively.</text>
</comment>
<comment type="catalytic activity">
    <reaction evidence="1">
        <text>glycolate + NADP(+) = glyoxylate + NADPH + H(+)</text>
        <dbReference type="Rhea" id="RHEA:10992"/>
        <dbReference type="ChEBI" id="CHEBI:15378"/>
        <dbReference type="ChEBI" id="CHEBI:29805"/>
        <dbReference type="ChEBI" id="CHEBI:36655"/>
        <dbReference type="ChEBI" id="CHEBI:57783"/>
        <dbReference type="ChEBI" id="CHEBI:58349"/>
        <dbReference type="EC" id="1.1.1.79"/>
    </reaction>
</comment>
<comment type="catalytic activity">
    <reaction evidence="1">
        <text>(R)-glycerate + NAD(+) = 3-hydroxypyruvate + NADH + H(+)</text>
        <dbReference type="Rhea" id="RHEA:17905"/>
        <dbReference type="ChEBI" id="CHEBI:15378"/>
        <dbReference type="ChEBI" id="CHEBI:16659"/>
        <dbReference type="ChEBI" id="CHEBI:17180"/>
        <dbReference type="ChEBI" id="CHEBI:57540"/>
        <dbReference type="ChEBI" id="CHEBI:57945"/>
        <dbReference type="EC" id="1.1.1.81"/>
    </reaction>
</comment>
<comment type="catalytic activity">
    <reaction evidence="1">
        <text>(R)-glycerate + NADP(+) = 3-hydroxypyruvate + NADPH + H(+)</text>
        <dbReference type="Rhea" id="RHEA:18657"/>
        <dbReference type="ChEBI" id="CHEBI:15378"/>
        <dbReference type="ChEBI" id="CHEBI:16659"/>
        <dbReference type="ChEBI" id="CHEBI:17180"/>
        <dbReference type="ChEBI" id="CHEBI:57783"/>
        <dbReference type="ChEBI" id="CHEBI:58349"/>
        <dbReference type="EC" id="1.1.1.81"/>
    </reaction>
</comment>
<comment type="subunit">
    <text evidence="1">Homodimer.</text>
</comment>
<comment type="subcellular location">
    <subcellularLocation>
        <location evidence="1">Cytoplasm</location>
    </subcellularLocation>
</comment>
<comment type="similarity">
    <text evidence="1">Belongs to the D-isomer specific 2-hydroxyacid dehydrogenase family. GhrB subfamily.</text>
</comment>